<reference key="1">
    <citation type="submission" date="2007-02" db="EMBL/GenBank/DDBJ databases">
        <title>Complete sequence of chromosome of Shewanella baltica OS155.</title>
        <authorList>
            <consortium name="US DOE Joint Genome Institute"/>
            <person name="Copeland A."/>
            <person name="Lucas S."/>
            <person name="Lapidus A."/>
            <person name="Barry K."/>
            <person name="Detter J.C."/>
            <person name="Glavina del Rio T."/>
            <person name="Hammon N."/>
            <person name="Israni S."/>
            <person name="Dalin E."/>
            <person name="Tice H."/>
            <person name="Pitluck S."/>
            <person name="Sims D.R."/>
            <person name="Brettin T."/>
            <person name="Bruce D."/>
            <person name="Han C."/>
            <person name="Tapia R."/>
            <person name="Brainard J."/>
            <person name="Schmutz J."/>
            <person name="Larimer F."/>
            <person name="Land M."/>
            <person name="Hauser L."/>
            <person name="Kyrpides N."/>
            <person name="Mikhailova N."/>
            <person name="Brettar I."/>
            <person name="Klappenbach J."/>
            <person name="Konstantinidis K."/>
            <person name="Rodrigues J."/>
            <person name="Tiedje J."/>
            <person name="Richardson P."/>
        </authorList>
    </citation>
    <scope>NUCLEOTIDE SEQUENCE [LARGE SCALE GENOMIC DNA]</scope>
    <source>
        <strain>OS155 / ATCC BAA-1091</strain>
    </source>
</reference>
<accession>A3D9Q0</accession>
<gene>
    <name evidence="1" type="primary">dapF</name>
    <name type="ordered locus">Sbal_3995</name>
</gene>
<name>DAPF_SHEB5</name>
<evidence type="ECO:0000255" key="1">
    <source>
        <dbReference type="HAMAP-Rule" id="MF_00197"/>
    </source>
</evidence>
<protein>
    <recommendedName>
        <fullName evidence="1">Diaminopimelate epimerase</fullName>
        <shortName evidence="1">DAP epimerase</shortName>
        <ecNumber evidence="1">5.1.1.7</ecNumber>
    </recommendedName>
    <alternativeName>
        <fullName evidence="1">PLP-independent amino acid racemase</fullName>
    </alternativeName>
</protein>
<proteinExistence type="inferred from homology"/>
<keyword id="KW-0028">Amino-acid biosynthesis</keyword>
<keyword id="KW-0963">Cytoplasm</keyword>
<keyword id="KW-0413">Isomerase</keyword>
<keyword id="KW-0457">Lysine biosynthesis</keyword>
<keyword id="KW-1185">Reference proteome</keyword>
<organism>
    <name type="scientific">Shewanella baltica (strain OS155 / ATCC BAA-1091)</name>
    <dbReference type="NCBI Taxonomy" id="325240"/>
    <lineage>
        <taxon>Bacteria</taxon>
        <taxon>Pseudomonadati</taxon>
        <taxon>Pseudomonadota</taxon>
        <taxon>Gammaproteobacteria</taxon>
        <taxon>Alteromonadales</taxon>
        <taxon>Shewanellaceae</taxon>
        <taxon>Shewanella</taxon>
    </lineage>
</organism>
<feature type="chain" id="PRO_1000011960" description="Diaminopimelate epimerase">
    <location>
        <begin position="1"/>
        <end position="275"/>
    </location>
</feature>
<feature type="active site" description="Proton donor" evidence="1">
    <location>
        <position position="74"/>
    </location>
</feature>
<feature type="active site" description="Proton acceptor" evidence="1">
    <location>
        <position position="218"/>
    </location>
</feature>
<feature type="binding site" evidence="1">
    <location>
        <position position="12"/>
    </location>
    <ligand>
        <name>substrate</name>
    </ligand>
</feature>
<feature type="binding site" evidence="1">
    <location>
        <position position="45"/>
    </location>
    <ligand>
        <name>substrate</name>
    </ligand>
</feature>
<feature type="binding site" evidence="1">
    <location>
        <position position="65"/>
    </location>
    <ligand>
        <name>substrate</name>
    </ligand>
</feature>
<feature type="binding site" evidence="1">
    <location>
        <begin position="75"/>
        <end position="76"/>
    </location>
    <ligand>
        <name>substrate</name>
    </ligand>
</feature>
<feature type="binding site" evidence="1">
    <location>
        <position position="158"/>
    </location>
    <ligand>
        <name>substrate</name>
    </ligand>
</feature>
<feature type="binding site" evidence="1">
    <location>
        <position position="191"/>
    </location>
    <ligand>
        <name>substrate</name>
    </ligand>
</feature>
<feature type="binding site" evidence="1">
    <location>
        <begin position="209"/>
        <end position="210"/>
    </location>
    <ligand>
        <name>substrate</name>
    </ligand>
</feature>
<feature type="binding site" evidence="1">
    <location>
        <begin position="219"/>
        <end position="220"/>
    </location>
    <ligand>
        <name>substrate</name>
    </ligand>
</feature>
<feature type="site" description="Could be important to modulate the pK values of the two catalytic cysteine residues" evidence="1">
    <location>
        <position position="160"/>
    </location>
</feature>
<feature type="site" description="Could be important to modulate the pK values of the two catalytic cysteine residues" evidence="1">
    <location>
        <position position="209"/>
    </location>
</feature>
<feature type="site" description="Important for dimerization" evidence="1">
    <location>
        <position position="269"/>
    </location>
</feature>
<comment type="function">
    <text evidence="1">Catalyzes the stereoinversion of LL-2,6-diaminopimelate (L,L-DAP) to meso-diaminopimelate (meso-DAP), a precursor of L-lysine and an essential component of the bacterial peptidoglycan.</text>
</comment>
<comment type="catalytic activity">
    <reaction evidence="1">
        <text>(2S,6S)-2,6-diaminopimelate = meso-2,6-diaminopimelate</text>
        <dbReference type="Rhea" id="RHEA:15393"/>
        <dbReference type="ChEBI" id="CHEBI:57609"/>
        <dbReference type="ChEBI" id="CHEBI:57791"/>
        <dbReference type="EC" id="5.1.1.7"/>
    </reaction>
</comment>
<comment type="pathway">
    <text evidence="1">Amino-acid biosynthesis; L-lysine biosynthesis via DAP pathway; DL-2,6-diaminopimelate from LL-2,6-diaminopimelate: step 1/1.</text>
</comment>
<comment type="subunit">
    <text evidence="1">Homodimer.</text>
</comment>
<comment type="subcellular location">
    <subcellularLocation>
        <location evidence="1">Cytoplasm</location>
    </subcellularLocation>
</comment>
<comment type="similarity">
    <text evidence="1">Belongs to the diaminopimelate epimerase family.</text>
</comment>
<sequence length="275" mass="30105">MIQFTKMHGLGNDFMVVDGVTQNVFFSPEQIRRLADRNFGIGFDQLLLVEPPYDPDLDFHYRIFNADGTEVEQCGNGARCFARFVRNKGLTNKSKIRVSTSSGKMTLRLERDGTVTVNMGVPILEPSQIPFKAKKPEKTYLLQTPMQTFLCGAASMGNPHCVLDVEDVASASVAEIGAMLTKHERFPRGVNVGFMQVVDSGHIKLRVYERGAAETLACGTGACAAVVVGQVQGKLGQQVRVDLPGGTLTINWEGEGKPLWMTGPAQHVYDGQIQL</sequence>
<dbReference type="EC" id="5.1.1.7" evidence="1"/>
<dbReference type="EMBL" id="CP000563">
    <property type="protein sequence ID" value="ABN63463.1"/>
    <property type="molecule type" value="Genomic_DNA"/>
</dbReference>
<dbReference type="RefSeq" id="WP_006083422.1">
    <property type="nucleotide sequence ID" value="NC_009052.1"/>
</dbReference>
<dbReference type="SMR" id="A3D9Q0"/>
<dbReference type="STRING" id="325240.Sbal_3995"/>
<dbReference type="GeneID" id="11775013"/>
<dbReference type="KEGG" id="sbl:Sbal_3995"/>
<dbReference type="HOGENOM" id="CLU_053306_1_1_6"/>
<dbReference type="OrthoDB" id="9805408at2"/>
<dbReference type="UniPathway" id="UPA00034">
    <property type="reaction ID" value="UER00025"/>
</dbReference>
<dbReference type="Proteomes" id="UP000001557">
    <property type="component" value="Chromosome"/>
</dbReference>
<dbReference type="GO" id="GO:0005829">
    <property type="term" value="C:cytosol"/>
    <property type="evidence" value="ECO:0007669"/>
    <property type="project" value="TreeGrafter"/>
</dbReference>
<dbReference type="GO" id="GO:0008837">
    <property type="term" value="F:diaminopimelate epimerase activity"/>
    <property type="evidence" value="ECO:0007669"/>
    <property type="project" value="UniProtKB-UniRule"/>
</dbReference>
<dbReference type="GO" id="GO:0009089">
    <property type="term" value="P:lysine biosynthetic process via diaminopimelate"/>
    <property type="evidence" value="ECO:0007669"/>
    <property type="project" value="UniProtKB-UniRule"/>
</dbReference>
<dbReference type="FunFam" id="3.10.310.10:FF:000001">
    <property type="entry name" value="Diaminopimelate epimerase"/>
    <property type="match status" value="1"/>
</dbReference>
<dbReference type="FunFam" id="3.10.310.10:FF:000002">
    <property type="entry name" value="Diaminopimelate epimerase"/>
    <property type="match status" value="1"/>
</dbReference>
<dbReference type="Gene3D" id="3.10.310.10">
    <property type="entry name" value="Diaminopimelate Epimerase, Chain A, domain 1"/>
    <property type="match status" value="2"/>
</dbReference>
<dbReference type="HAMAP" id="MF_00197">
    <property type="entry name" value="DAP_epimerase"/>
    <property type="match status" value="1"/>
</dbReference>
<dbReference type="InterPro" id="IPR018510">
    <property type="entry name" value="DAP_epimerase_AS"/>
</dbReference>
<dbReference type="InterPro" id="IPR001653">
    <property type="entry name" value="DAP_epimerase_DapF"/>
</dbReference>
<dbReference type="NCBIfam" id="TIGR00652">
    <property type="entry name" value="DapF"/>
    <property type="match status" value="1"/>
</dbReference>
<dbReference type="PANTHER" id="PTHR31689:SF0">
    <property type="entry name" value="DIAMINOPIMELATE EPIMERASE"/>
    <property type="match status" value="1"/>
</dbReference>
<dbReference type="PANTHER" id="PTHR31689">
    <property type="entry name" value="DIAMINOPIMELATE EPIMERASE, CHLOROPLASTIC"/>
    <property type="match status" value="1"/>
</dbReference>
<dbReference type="Pfam" id="PF01678">
    <property type="entry name" value="DAP_epimerase"/>
    <property type="match status" value="2"/>
</dbReference>
<dbReference type="SUPFAM" id="SSF54506">
    <property type="entry name" value="Diaminopimelate epimerase-like"/>
    <property type="match status" value="1"/>
</dbReference>
<dbReference type="PROSITE" id="PS01326">
    <property type="entry name" value="DAP_EPIMERASE"/>
    <property type="match status" value="1"/>
</dbReference>